<name>DAPE_COXBN</name>
<proteinExistence type="inferred from homology"/>
<evidence type="ECO:0000255" key="1">
    <source>
        <dbReference type="HAMAP-Rule" id="MF_01690"/>
    </source>
</evidence>
<reference key="1">
    <citation type="journal article" date="2009" name="Infect. Immun.">
        <title>Comparative genomics reveal extensive transposon-mediated genomic plasticity and diversity among potential effector proteins within the genus Coxiella.</title>
        <authorList>
            <person name="Beare P.A."/>
            <person name="Unsworth N."/>
            <person name="Andoh M."/>
            <person name="Voth D.E."/>
            <person name="Omsland A."/>
            <person name="Gilk S.D."/>
            <person name="Williams K.P."/>
            <person name="Sobral B.W."/>
            <person name="Kupko J.J. III"/>
            <person name="Porcella S.F."/>
            <person name="Samuel J.E."/>
            <person name="Heinzen R.A."/>
        </authorList>
    </citation>
    <scope>NUCLEOTIDE SEQUENCE [LARGE SCALE GENOMIC DNA]</scope>
    <source>
        <strain>Dugway 5J108-111</strain>
    </source>
</reference>
<gene>
    <name evidence="1" type="primary">dapE</name>
    <name type="ordered locus">CBUD_0676</name>
</gene>
<sequence length="374" mass="41644">MSETLNLLKQLIERPSITPNDAGCQTILIDRLKSVGFQCEHLPFGEVHNFWAWHGHQSPFIIFAGHTDVVPPGDETQWHSPPFTPTEKNGYIYGRGAADMKSGLAAMVVAAENFVKQNPDHNGTIGFIVTSDEEGPAENGTQKVVDYLQQKNIKLDYCIVGEASSNEKLGDAIKIGRRGSMHGELTIIGKQGHIAYPHLADNPIHRSFQAFEALAKTKWDEGNEHFTPTSFQFYNVEAGAGAANVIPATLKAKFNFRFAPIHTTQQLQQKVERILNYYQLNYDIQWNVSSQPFFSGNGRLATFVRQAIQEICHLNTEPNTYGGTSDGRFIATTGCEVIELGPVNKTAHHVNENICIADLEKLTDIYFRTLQLLT</sequence>
<protein>
    <recommendedName>
        <fullName evidence="1">Succinyl-diaminopimelate desuccinylase</fullName>
        <shortName evidence="1">SDAP desuccinylase</shortName>
        <ecNumber evidence="1">3.5.1.18</ecNumber>
    </recommendedName>
    <alternativeName>
        <fullName evidence="1">N-succinyl-LL-2,6-diaminoheptanedioate amidohydrolase</fullName>
    </alternativeName>
</protein>
<dbReference type="EC" id="3.5.1.18" evidence="1"/>
<dbReference type="EMBL" id="CP000733">
    <property type="protein sequence ID" value="ABS78063.1"/>
    <property type="molecule type" value="Genomic_DNA"/>
</dbReference>
<dbReference type="RefSeq" id="WP_005771873.1">
    <property type="nucleotide sequence ID" value="NC_009727.1"/>
</dbReference>
<dbReference type="SMR" id="A9KC82"/>
<dbReference type="KEGG" id="cbd:CBUD_0676"/>
<dbReference type="HOGENOM" id="CLU_021802_4_0_6"/>
<dbReference type="UniPathway" id="UPA00034">
    <property type="reaction ID" value="UER00021"/>
</dbReference>
<dbReference type="Proteomes" id="UP000008555">
    <property type="component" value="Chromosome"/>
</dbReference>
<dbReference type="GO" id="GO:0008777">
    <property type="term" value="F:acetylornithine deacetylase activity"/>
    <property type="evidence" value="ECO:0007669"/>
    <property type="project" value="TreeGrafter"/>
</dbReference>
<dbReference type="GO" id="GO:0050897">
    <property type="term" value="F:cobalt ion binding"/>
    <property type="evidence" value="ECO:0007669"/>
    <property type="project" value="UniProtKB-UniRule"/>
</dbReference>
<dbReference type="GO" id="GO:0009014">
    <property type="term" value="F:succinyl-diaminopimelate desuccinylase activity"/>
    <property type="evidence" value="ECO:0007669"/>
    <property type="project" value="UniProtKB-UniRule"/>
</dbReference>
<dbReference type="GO" id="GO:0008270">
    <property type="term" value="F:zinc ion binding"/>
    <property type="evidence" value="ECO:0007669"/>
    <property type="project" value="UniProtKB-UniRule"/>
</dbReference>
<dbReference type="GO" id="GO:0019877">
    <property type="term" value="P:diaminopimelate biosynthetic process"/>
    <property type="evidence" value="ECO:0007669"/>
    <property type="project" value="UniProtKB-UniRule"/>
</dbReference>
<dbReference type="GO" id="GO:0006526">
    <property type="term" value="P:L-arginine biosynthetic process"/>
    <property type="evidence" value="ECO:0007669"/>
    <property type="project" value="TreeGrafter"/>
</dbReference>
<dbReference type="GO" id="GO:0009089">
    <property type="term" value="P:lysine biosynthetic process via diaminopimelate"/>
    <property type="evidence" value="ECO:0007669"/>
    <property type="project" value="UniProtKB-UniRule"/>
</dbReference>
<dbReference type="CDD" id="cd03891">
    <property type="entry name" value="M20_DapE_proteobac"/>
    <property type="match status" value="1"/>
</dbReference>
<dbReference type="FunFam" id="3.30.70.360:FF:000011">
    <property type="entry name" value="Succinyl-diaminopimelate desuccinylase"/>
    <property type="match status" value="1"/>
</dbReference>
<dbReference type="FunFam" id="3.40.630.10:FF:000005">
    <property type="entry name" value="Succinyl-diaminopimelate desuccinylase"/>
    <property type="match status" value="1"/>
</dbReference>
<dbReference type="Gene3D" id="3.30.70.360">
    <property type="match status" value="1"/>
</dbReference>
<dbReference type="Gene3D" id="3.40.630.10">
    <property type="entry name" value="Zn peptidases"/>
    <property type="match status" value="1"/>
</dbReference>
<dbReference type="HAMAP" id="MF_01690">
    <property type="entry name" value="DapE"/>
    <property type="match status" value="1"/>
</dbReference>
<dbReference type="InterPro" id="IPR001261">
    <property type="entry name" value="ArgE/DapE_CS"/>
</dbReference>
<dbReference type="InterPro" id="IPR036264">
    <property type="entry name" value="Bact_exopeptidase_dim_dom"/>
</dbReference>
<dbReference type="InterPro" id="IPR005941">
    <property type="entry name" value="DapE_proteobac"/>
</dbReference>
<dbReference type="InterPro" id="IPR002933">
    <property type="entry name" value="Peptidase_M20"/>
</dbReference>
<dbReference type="InterPro" id="IPR011650">
    <property type="entry name" value="Peptidase_M20_dimer"/>
</dbReference>
<dbReference type="InterPro" id="IPR050072">
    <property type="entry name" value="Peptidase_M20A"/>
</dbReference>
<dbReference type="NCBIfam" id="TIGR01246">
    <property type="entry name" value="dapE_proteo"/>
    <property type="match status" value="1"/>
</dbReference>
<dbReference type="NCBIfam" id="NF009557">
    <property type="entry name" value="PRK13009.1"/>
    <property type="match status" value="1"/>
</dbReference>
<dbReference type="PANTHER" id="PTHR43808">
    <property type="entry name" value="ACETYLORNITHINE DEACETYLASE"/>
    <property type="match status" value="1"/>
</dbReference>
<dbReference type="PANTHER" id="PTHR43808:SF31">
    <property type="entry name" value="N-ACETYL-L-CITRULLINE DEACETYLASE"/>
    <property type="match status" value="1"/>
</dbReference>
<dbReference type="Pfam" id="PF07687">
    <property type="entry name" value="M20_dimer"/>
    <property type="match status" value="1"/>
</dbReference>
<dbReference type="Pfam" id="PF01546">
    <property type="entry name" value="Peptidase_M20"/>
    <property type="match status" value="1"/>
</dbReference>
<dbReference type="SUPFAM" id="SSF55031">
    <property type="entry name" value="Bacterial exopeptidase dimerisation domain"/>
    <property type="match status" value="1"/>
</dbReference>
<dbReference type="SUPFAM" id="SSF53187">
    <property type="entry name" value="Zn-dependent exopeptidases"/>
    <property type="match status" value="1"/>
</dbReference>
<dbReference type="PROSITE" id="PS00759">
    <property type="entry name" value="ARGE_DAPE_CPG2_2"/>
    <property type="match status" value="1"/>
</dbReference>
<organism>
    <name type="scientific">Coxiella burnetii (strain Dugway 5J108-111)</name>
    <dbReference type="NCBI Taxonomy" id="434922"/>
    <lineage>
        <taxon>Bacteria</taxon>
        <taxon>Pseudomonadati</taxon>
        <taxon>Pseudomonadota</taxon>
        <taxon>Gammaproteobacteria</taxon>
        <taxon>Legionellales</taxon>
        <taxon>Coxiellaceae</taxon>
        <taxon>Coxiella</taxon>
    </lineage>
</organism>
<comment type="function">
    <text evidence="1">Catalyzes the hydrolysis of N-succinyl-L,L-diaminopimelic acid (SDAP), forming succinate and LL-2,6-diaminopimelate (DAP), an intermediate involved in the bacterial biosynthesis of lysine and meso-diaminopimelic acid, an essential component of bacterial cell walls.</text>
</comment>
<comment type="catalytic activity">
    <reaction evidence="1">
        <text>N-succinyl-(2S,6S)-2,6-diaminopimelate + H2O = (2S,6S)-2,6-diaminopimelate + succinate</text>
        <dbReference type="Rhea" id="RHEA:22608"/>
        <dbReference type="ChEBI" id="CHEBI:15377"/>
        <dbReference type="ChEBI" id="CHEBI:30031"/>
        <dbReference type="ChEBI" id="CHEBI:57609"/>
        <dbReference type="ChEBI" id="CHEBI:58087"/>
        <dbReference type="EC" id="3.5.1.18"/>
    </reaction>
</comment>
<comment type="cofactor">
    <cofactor evidence="1">
        <name>Zn(2+)</name>
        <dbReference type="ChEBI" id="CHEBI:29105"/>
    </cofactor>
    <cofactor evidence="1">
        <name>Co(2+)</name>
        <dbReference type="ChEBI" id="CHEBI:48828"/>
    </cofactor>
    <text evidence="1">Binds 2 Zn(2+) or Co(2+) ions per subunit.</text>
</comment>
<comment type="pathway">
    <text evidence="1">Amino-acid biosynthesis; L-lysine biosynthesis via DAP pathway; LL-2,6-diaminopimelate from (S)-tetrahydrodipicolinate (succinylase route): step 3/3.</text>
</comment>
<comment type="subunit">
    <text evidence="1">Homodimer.</text>
</comment>
<comment type="similarity">
    <text evidence="1">Belongs to the peptidase M20A family. DapE subfamily.</text>
</comment>
<accession>A9KC82</accession>
<feature type="chain" id="PRO_0000375537" description="Succinyl-diaminopimelate desuccinylase">
    <location>
        <begin position="1"/>
        <end position="374"/>
    </location>
</feature>
<feature type="active site" evidence="1">
    <location>
        <position position="68"/>
    </location>
</feature>
<feature type="active site" description="Proton acceptor" evidence="1">
    <location>
        <position position="133"/>
    </location>
</feature>
<feature type="binding site" evidence="1">
    <location>
        <position position="66"/>
    </location>
    <ligand>
        <name>Zn(2+)</name>
        <dbReference type="ChEBI" id="CHEBI:29105"/>
        <label>1</label>
    </ligand>
</feature>
<feature type="binding site" evidence="1">
    <location>
        <position position="99"/>
    </location>
    <ligand>
        <name>Zn(2+)</name>
        <dbReference type="ChEBI" id="CHEBI:29105"/>
        <label>1</label>
    </ligand>
</feature>
<feature type="binding site" evidence="1">
    <location>
        <position position="99"/>
    </location>
    <ligand>
        <name>Zn(2+)</name>
        <dbReference type="ChEBI" id="CHEBI:29105"/>
        <label>2</label>
    </ligand>
</feature>
<feature type="binding site" evidence="1">
    <location>
        <position position="134"/>
    </location>
    <ligand>
        <name>Zn(2+)</name>
        <dbReference type="ChEBI" id="CHEBI:29105"/>
        <label>2</label>
    </ligand>
</feature>
<feature type="binding site" evidence="1">
    <location>
        <position position="162"/>
    </location>
    <ligand>
        <name>Zn(2+)</name>
        <dbReference type="ChEBI" id="CHEBI:29105"/>
        <label>1</label>
    </ligand>
</feature>
<feature type="binding site" evidence="1">
    <location>
        <position position="348"/>
    </location>
    <ligand>
        <name>Zn(2+)</name>
        <dbReference type="ChEBI" id="CHEBI:29105"/>
        <label>2</label>
    </ligand>
</feature>
<keyword id="KW-0028">Amino-acid biosynthesis</keyword>
<keyword id="KW-0170">Cobalt</keyword>
<keyword id="KW-0220">Diaminopimelate biosynthesis</keyword>
<keyword id="KW-0378">Hydrolase</keyword>
<keyword id="KW-0457">Lysine biosynthesis</keyword>
<keyword id="KW-0479">Metal-binding</keyword>
<keyword id="KW-0862">Zinc</keyword>